<comment type="function">
    <text evidence="1">Excises uracil residues from the DNA which can arise as a result of misincorporation of dUMP residues by DNA polymerase or due to deamination of cytosine.</text>
</comment>
<comment type="catalytic activity">
    <reaction evidence="1">
        <text>Hydrolyzes single-stranded DNA or mismatched double-stranded DNA and polynucleotides, releasing free uracil.</text>
        <dbReference type="EC" id="3.2.2.27"/>
    </reaction>
</comment>
<comment type="subcellular location">
    <subcellularLocation>
        <location evidence="1">Cytoplasm</location>
    </subcellularLocation>
</comment>
<comment type="similarity">
    <text evidence="1">Belongs to the uracil-DNA glycosylase (UDG) superfamily. UNG family.</text>
</comment>
<proteinExistence type="inferred from homology"/>
<reference key="1">
    <citation type="journal article" date="2010" name="Genome Biol.">
        <title>Structure and dynamics of the pan-genome of Streptococcus pneumoniae and closely related species.</title>
        <authorList>
            <person name="Donati C."/>
            <person name="Hiller N.L."/>
            <person name="Tettelin H."/>
            <person name="Muzzi A."/>
            <person name="Croucher N.J."/>
            <person name="Angiuoli S.V."/>
            <person name="Oggioni M."/>
            <person name="Dunning Hotopp J.C."/>
            <person name="Hu F.Z."/>
            <person name="Riley D.R."/>
            <person name="Covacci A."/>
            <person name="Mitchell T.J."/>
            <person name="Bentley S.D."/>
            <person name="Kilian M."/>
            <person name="Ehrlich G.D."/>
            <person name="Rappuoli R."/>
            <person name="Moxon E.R."/>
            <person name="Masignani V."/>
        </authorList>
    </citation>
    <scope>NUCLEOTIDE SEQUENCE [LARGE SCALE GENOMIC DNA]</scope>
    <source>
        <strain>P1031</strain>
    </source>
</reference>
<gene>
    <name evidence="1" type="primary">ung</name>
    <name type="ordered locus">SPP_1211</name>
</gene>
<feature type="chain" id="PRO_1000199799" description="Uracil-DNA glycosylase">
    <location>
        <begin position="1"/>
        <end position="217"/>
    </location>
</feature>
<feature type="active site" description="Proton acceptor" evidence="1">
    <location>
        <position position="62"/>
    </location>
</feature>
<keyword id="KW-0963">Cytoplasm</keyword>
<keyword id="KW-0227">DNA damage</keyword>
<keyword id="KW-0234">DNA repair</keyword>
<keyword id="KW-0378">Hydrolase</keyword>
<accession>C1CKR8</accession>
<name>UNG_STRZP</name>
<sequence length="217" mass="24066">MEHSSWHALIKAQLPEGYFGKINQFMEQVYSQGIIYPPKEKVFQALLTTLLEEVKVVILGQDPYHGPGQAQGLSFSVPDSIPAPPSLQNILKELSDDIGVKKSHDLTSWAEQGVLLLNACLTVPAGQANGHAGQIWEPFTDAVIQVVNHLDRPVVFVLWGAYARKKKALVTNPHHLIIESAHPSPLSVYRGFWGSKPFSKANAFLKETGQEPIDWLR</sequence>
<organism>
    <name type="scientific">Streptococcus pneumoniae (strain P1031)</name>
    <dbReference type="NCBI Taxonomy" id="488223"/>
    <lineage>
        <taxon>Bacteria</taxon>
        <taxon>Bacillati</taxon>
        <taxon>Bacillota</taxon>
        <taxon>Bacilli</taxon>
        <taxon>Lactobacillales</taxon>
        <taxon>Streptococcaceae</taxon>
        <taxon>Streptococcus</taxon>
    </lineage>
</organism>
<protein>
    <recommendedName>
        <fullName evidence="1">Uracil-DNA glycosylase</fullName>
        <shortName evidence="1">UDG</shortName>
        <ecNumber evidence="1">3.2.2.27</ecNumber>
    </recommendedName>
</protein>
<evidence type="ECO:0000255" key="1">
    <source>
        <dbReference type="HAMAP-Rule" id="MF_00148"/>
    </source>
</evidence>
<dbReference type="EC" id="3.2.2.27" evidence="1"/>
<dbReference type="EMBL" id="CP000920">
    <property type="protein sequence ID" value="ACO21383.1"/>
    <property type="molecule type" value="Genomic_DNA"/>
</dbReference>
<dbReference type="RefSeq" id="WP_000401329.1">
    <property type="nucleotide sequence ID" value="NC_012467.1"/>
</dbReference>
<dbReference type="SMR" id="C1CKR8"/>
<dbReference type="KEGG" id="spp:SPP_1211"/>
<dbReference type="HOGENOM" id="CLU_032162_3_1_9"/>
<dbReference type="GO" id="GO:0005737">
    <property type="term" value="C:cytoplasm"/>
    <property type="evidence" value="ECO:0007669"/>
    <property type="project" value="UniProtKB-SubCell"/>
</dbReference>
<dbReference type="GO" id="GO:0004844">
    <property type="term" value="F:uracil DNA N-glycosylase activity"/>
    <property type="evidence" value="ECO:0007669"/>
    <property type="project" value="UniProtKB-UniRule"/>
</dbReference>
<dbReference type="GO" id="GO:0097510">
    <property type="term" value="P:base-excision repair, AP site formation via deaminated base removal"/>
    <property type="evidence" value="ECO:0007669"/>
    <property type="project" value="TreeGrafter"/>
</dbReference>
<dbReference type="CDD" id="cd10027">
    <property type="entry name" value="UDG-F1-like"/>
    <property type="match status" value="1"/>
</dbReference>
<dbReference type="FunFam" id="3.40.470.10:FF:000008">
    <property type="entry name" value="Uracil-DNA glycosylase"/>
    <property type="match status" value="1"/>
</dbReference>
<dbReference type="Gene3D" id="3.40.470.10">
    <property type="entry name" value="Uracil-DNA glycosylase-like domain"/>
    <property type="match status" value="1"/>
</dbReference>
<dbReference type="HAMAP" id="MF_00148">
    <property type="entry name" value="UDG"/>
    <property type="match status" value="1"/>
</dbReference>
<dbReference type="InterPro" id="IPR002043">
    <property type="entry name" value="UDG_fam1"/>
</dbReference>
<dbReference type="InterPro" id="IPR018085">
    <property type="entry name" value="Ura-DNA_Glyclase_AS"/>
</dbReference>
<dbReference type="InterPro" id="IPR005122">
    <property type="entry name" value="Uracil-DNA_glycosylase-like"/>
</dbReference>
<dbReference type="InterPro" id="IPR036895">
    <property type="entry name" value="Uracil-DNA_glycosylase-like_sf"/>
</dbReference>
<dbReference type="NCBIfam" id="NF003588">
    <property type="entry name" value="PRK05254.1-1"/>
    <property type="match status" value="1"/>
</dbReference>
<dbReference type="NCBIfam" id="NF003589">
    <property type="entry name" value="PRK05254.1-2"/>
    <property type="match status" value="1"/>
</dbReference>
<dbReference type="NCBIfam" id="NF003591">
    <property type="entry name" value="PRK05254.1-4"/>
    <property type="match status" value="1"/>
</dbReference>
<dbReference type="NCBIfam" id="NF003592">
    <property type="entry name" value="PRK05254.1-5"/>
    <property type="match status" value="1"/>
</dbReference>
<dbReference type="NCBIfam" id="TIGR00628">
    <property type="entry name" value="ung"/>
    <property type="match status" value="1"/>
</dbReference>
<dbReference type="PANTHER" id="PTHR11264">
    <property type="entry name" value="URACIL-DNA GLYCOSYLASE"/>
    <property type="match status" value="1"/>
</dbReference>
<dbReference type="PANTHER" id="PTHR11264:SF0">
    <property type="entry name" value="URACIL-DNA GLYCOSYLASE"/>
    <property type="match status" value="1"/>
</dbReference>
<dbReference type="Pfam" id="PF03167">
    <property type="entry name" value="UDG"/>
    <property type="match status" value="1"/>
</dbReference>
<dbReference type="SMART" id="SM00986">
    <property type="entry name" value="UDG"/>
    <property type="match status" value="1"/>
</dbReference>
<dbReference type="SMART" id="SM00987">
    <property type="entry name" value="UreE_C"/>
    <property type="match status" value="1"/>
</dbReference>
<dbReference type="SUPFAM" id="SSF52141">
    <property type="entry name" value="Uracil-DNA glycosylase-like"/>
    <property type="match status" value="1"/>
</dbReference>
<dbReference type="PROSITE" id="PS00130">
    <property type="entry name" value="U_DNA_GLYCOSYLASE"/>
    <property type="match status" value="1"/>
</dbReference>